<comment type="function">
    <text evidence="1">Tetrapolymerization of the monopyrrole PBG into the hydroxymethylbilane pre-uroporphyrinogen in several discrete steps.</text>
</comment>
<comment type="catalytic activity">
    <reaction evidence="1">
        <text>4 porphobilinogen + H2O = hydroxymethylbilane + 4 NH4(+)</text>
        <dbReference type="Rhea" id="RHEA:13185"/>
        <dbReference type="ChEBI" id="CHEBI:15377"/>
        <dbReference type="ChEBI" id="CHEBI:28938"/>
        <dbReference type="ChEBI" id="CHEBI:57845"/>
        <dbReference type="ChEBI" id="CHEBI:58126"/>
        <dbReference type="EC" id="2.5.1.61"/>
    </reaction>
</comment>
<comment type="cofactor">
    <cofactor evidence="1">
        <name>dipyrromethane</name>
        <dbReference type="ChEBI" id="CHEBI:60342"/>
    </cofactor>
    <text evidence="1">Binds 1 dipyrromethane group covalently.</text>
</comment>
<comment type="pathway">
    <text evidence="1">Porphyrin-containing compound metabolism; protoporphyrin-IX biosynthesis; coproporphyrinogen-III from 5-aminolevulinate: step 2/4.</text>
</comment>
<comment type="subunit">
    <text evidence="1">Monomer.</text>
</comment>
<comment type="miscellaneous">
    <text evidence="1">The porphobilinogen subunits are added to the dipyrromethane group.</text>
</comment>
<comment type="similarity">
    <text evidence="1">Belongs to the HMBS family.</text>
</comment>
<reference key="1">
    <citation type="submission" date="2007-10" db="EMBL/GenBank/DDBJ databases">
        <title>Complete sequence of Desulfococcus oleovorans Hxd3.</title>
        <authorList>
            <consortium name="US DOE Joint Genome Institute"/>
            <person name="Copeland A."/>
            <person name="Lucas S."/>
            <person name="Lapidus A."/>
            <person name="Barry K."/>
            <person name="Glavina del Rio T."/>
            <person name="Dalin E."/>
            <person name="Tice H."/>
            <person name="Pitluck S."/>
            <person name="Kiss H."/>
            <person name="Brettin T."/>
            <person name="Bruce D."/>
            <person name="Detter J.C."/>
            <person name="Han C."/>
            <person name="Schmutz J."/>
            <person name="Larimer F."/>
            <person name="Land M."/>
            <person name="Hauser L."/>
            <person name="Kyrpides N."/>
            <person name="Kim E."/>
            <person name="Wawrik B."/>
            <person name="Richardson P."/>
        </authorList>
    </citation>
    <scope>NUCLEOTIDE SEQUENCE [LARGE SCALE GENOMIC DNA]</scope>
    <source>
        <strain>DSM 6200 / JCM 39069 / Hxd3</strain>
    </source>
</reference>
<sequence>MEIRIGSRKSSLAMWQTCYVEDKLKQSGITTSILPIDTRGDQVLNVAIAKIGSKGVFTEELEAKLADGDIDIAVHSAKDMPSVLPDGFELIAFTDREEPADVLVSHKKDLDISDSSRPVTIGTSSVRRQALLGRFYPHVRTVDIRGNVQTRVLKMKEGLCDAILMAYAGIHRMGMDDLIVHTFSPDTFIPPVGQGCIAVEASSRLAAEKKEAIRACINHPASETCLLAERAFLKRLEGGCSIPAFALARLNGDRLTLSGGLMSLDGKKFIFNTRAGAGSQATAIGTDLGNHVLENGGAALLAEIRKQQTT</sequence>
<evidence type="ECO:0000255" key="1">
    <source>
        <dbReference type="HAMAP-Rule" id="MF_00260"/>
    </source>
</evidence>
<organism>
    <name type="scientific">Desulfosudis oleivorans (strain DSM 6200 / JCM 39069 / Hxd3)</name>
    <name type="common">Desulfococcus oleovorans</name>
    <dbReference type="NCBI Taxonomy" id="96561"/>
    <lineage>
        <taxon>Bacteria</taxon>
        <taxon>Pseudomonadati</taxon>
        <taxon>Thermodesulfobacteriota</taxon>
        <taxon>Desulfobacteria</taxon>
        <taxon>Desulfobacterales</taxon>
        <taxon>Desulfosudaceae</taxon>
        <taxon>Desulfosudis</taxon>
    </lineage>
</organism>
<gene>
    <name evidence="1" type="primary">hemC</name>
    <name type="ordered locus">Dole_0963</name>
</gene>
<accession>A8ZWG5</accession>
<feature type="chain" id="PRO_1000119212" description="Porphobilinogen deaminase">
    <location>
        <begin position="1"/>
        <end position="310"/>
    </location>
</feature>
<feature type="modified residue" description="S-(dipyrrolylmethanemethyl)cysteine" evidence="1">
    <location>
        <position position="240"/>
    </location>
</feature>
<protein>
    <recommendedName>
        <fullName evidence="1">Porphobilinogen deaminase</fullName>
        <shortName evidence="1">PBG</shortName>
        <ecNumber evidence="1">2.5.1.61</ecNumber>
    </recommendedName>
    <alternativeName>
        <fullName evidence="1">Hydroxymethylbilane synthase</fullName>
        <shortName evidence="1">HMBS</shortName>
    </alternativeName>
    <alternativeName>
        <fullName evidence="1">Pre-uroporphyrinogen synthase</fullName>
    </alternativeName>
</protein>
<proteinExistence type="inferred from homology"/>
<dbReference type="EC" id="2.5.1.61" evidence="1"/>
<dbReference type="EMBL" id="CP000859">
    <property type="protein sequence ID" value="ABW66773.1"/>
    <property type="molecule type" value="Genomic_DNA"/>
</dbReference>
<dbReference type="RefSeq" id="WP_012174391.1">
    <property type="nucleotide sequence ID" value="NC_009943.1"/>
</dbReference>
<dbReference type="SMR" id="A8ZWG5"/>
<dbReference type="STRING" id="96561.Dole_0963"/>
<dbReference type="KEGG" id="dol:Dole_0963"/>
<dbReference type="eggNOG" id="COG0181">
    <property type="taxonomic scope" value="Bacteria"/>
</dbReference>
<dbReference type="HOGENOM" id="CLU_019704_1_0_7"/>
<dbReference type="OrthoDB" id="9810298at2"/>
<dbReference type="UniPathway" id="UPA00251">
    <property type="reaction ID" value="UER00319"/>
</dbReference>
<dbReference type="Proteomes" id="UP000008561">
    <property type="component" value="Chromosome"/>
</dbReference>
<dbReference type="GO" id="GO:0005737">
    <property type="term" value="C:cytoplasm"/>
    <property type="evidence" value="ECO:0007669"/>
    <property type="project" value="TreeGrafter"/>
</dbReference>
<dbReference type="GO" id="GO:0004418">
    <property type="term" value="F:hydroxymethylbilane synthase activity"/>
    <property type="evidence" value="ECO:0007669"/>
    <property type="project" value="UniProtKB-UniRule"/>
</dbReference>
<dbReference type="GO" id="GO:0006782">
    <property type="term" value="P:protoporphyrinogen IX biosynthetic process"/>
    <property type="evidence" value="ECO:0007669"/>
    <property type="project" value="UniProtKB-UniRule"/>
</dbReference>
<dbReference type="CDD" id="cd13645">
    <property type="entry name" value="PBP2_HuPBGD_like"/>
    <property type="match status" value="1"/>
</dbReference>
<dbReference type="FunFam" id="3.40.190.10:FF:000005">
    <property type="entry name" value="Porphobilinogen deaminase"/>
    <property type="match status" value="1"/>
</dbReference>
<dbReference type="Gene3D" id="3.40.190.10">
    <property type="entry name" value="Periplasmic binding protein-like II"/>
    <property type="match status" value="2"/>
</dbReference>
<dbReference type="Gene3D" id="3.30.160.40">
    <property type="entry name" value="Porphobilinogen deaminase, C-terminal domain"/>
    <property type="match status" value="1"/>
</dbReference>
<dbReference type="HAMAP" id="MF_00260">
    <property type="entry name" value="Porphobil_deam"/>
    <property type="match status" value="1"/>
</dbReference>
<dbReference type="InterPro" id="IPR000860">
    <property type="entry name" value="HemC"/>
</dbReference>
<dbReference type="InterPro" id="IPR022417">
    <property type="entry name" value="Porphobilin_deaminase_N"/>
</dbReference>
<dbReference type="InterPro" id="IPR022418">
    <property type="entry name" value="Porphobilinogen_deaminase_C"/>
</dbReference>
<dbReference type="InterPro" id="IPR036803">
    <property type="entry name" value="Porphobilinogen_deaminase_C_sf"/>
</dbReference>
<dbReference type="NCBIfam" id="TIGR00212">
    <property type="entry name" value="hemC"/>
    <property type="match status" value="1"/>
</dbReference>
<dbReference type="PANTHER" id="PTHR11557">
    <property type="entry name" value="PORPHOBILINOGEN DEAMINASE"/>
    <property type="match status" value="1"/>
</dbReference>
<dbReference type="PANTHER" id="PTHR11557:SF0">
    <property type="entry name" value="PORPHOBILINOGEN DEAMINASE"/>
    <property type="match status" value="1"/>
</dbReference>
<dbReference type="Pfam" id="PF01379">
    <property type="entry name" value="Porphobil_deam"/>
    <property type="match status" value="1"/>
</dbReference>
<dbReference type="Pfam" id="PF03900">
    <property type="entry name" value="Porphobil_deamC"/>
    <property type="match status" value="1"/>
</dbReference>
<dbReference type="PIRSF" id="PIRSF001438">
    <property type="entry name" value="4pyrrol_synth_OHMeBilane_synth"/>
    <property type="match status" value="1"/>
</dbReference>
<dbReference type="PRINTS" id="PR00151">
    <property type="entry name" value="PORPHBDMNASE"/>
</dbReference>
<dbReference type="SUPFAM" id="SSF53850">
    <property type="entry name" value="Periplasmic binding protein-like II"/>
    <property type="match status" value="1"/>
</dbReference>
<dbReference type="SUPFAM" id="SSF54782">
    <property type="entry name" value="Porphobilinogen deaminase (hydroxymethylbilane synthase), C-terminal domain"/>
    <property type="match status" value="1"/>
</dbReference>
<keyword id="KW-0627">Porphyrin biosynthesis</keyword>
<keyword id="KW-1185">Reference proteome</keyword>
<keyword id="KW-0808">Transferase</keyword>
<name>HEM3_DESOH</name>